<accession>O13988</accession>
<protein>
    <recommendedName>
        <fullName>Protection of telomeres protein 1</fullName>
    </recommendedName>
</protein>
<comment type="function">
    <text evidence="1 2 3">Single-stranded telomeric DNA-binding protein that is required to protect the 3'-end telomeric overhang. It binds the consensus sequence 5'-GGTTAC-3'. Regulates telomerase and telomere length.</text>
</comment>
<comment type="subunit">
    <text evidence="2 3">Self-associates. Interacts with ccq1, poz1 and tpz1.</text>
</comment>
<comment type="subcellular location">
    <subcellularLocation>
        <location>Nucleus</location>
    </subcellularLocation>
    <subcellularLocation>
        <location>Chromosome</location>
        <location>Telomere</location>
    </subcellularLocation>
</comment>
<comment type="similarity">
    <text evidence="4">Belongs to the telombin family.</text>
</comment>
<gene>
    <name type="primary">pot1</name>
    <name type="ORF">SPAC26H5.06</name>
</gene>
<reference key="1">
    <citation type="journal article" date="2002" name="Nature">
        <title>The genome sequence of Schizosaccharomyces pombe.</title>
        <authorList>
            <person name="Wood V."/>
            <person name="Gwilliam R."/>
            <person name="Rajandream M.A."/>
            <person name="Lyne M.H."/>
            <person name="Lyne R."/>
            <person name="Stewart A."/>
            <person name="Sgouros J.G."/>
            <person name="Peat N."/>
            <person name="Hayles J."/>
            <person name="Baker S.G."/>
            <person name="Basham D."/>
            <person name="Bowman S."/>
            <person name="Brooks K."/>
            <person name="Brown D."/>
            <person name="Brown S."/>
            <person name="Chillingworth T."/>
            <person name="Churcher C.M."/>
            <person name="Collins M."/>
            <person name="Connor R."/>
            <person name="Cronin A."/>
            <person name="Davis P."/>
            <person name="Feltwell T."/>
            <person name="Fraser A."/>
            <person name="Gentles S."/>
            <person name="Goble A."/>
            <person name="Hamlin N."/>
            <person name="Harris D.E."/>
            <person name="Hidalgo J."/>
            <person name="Hodgson G."/>
            <person name="Holroyd S."/>
            <person name="Hornsby T."/>
            <person name="Howarth S."/>
            <person name="Huckle E.J."/>
            <person name="Hunt S."/>
            <person name="Jagels K."/>
            <person name="James K.D."/>
            <person name="Jones L."/>
            <person name="Jones M."/>
            <person name="Leather S."/>
            <person name="McDonald S."/>
            <person name="McLean J."/>
            <person name="Mooney P."/>
            <person name="Moule S."/>
            <person name="Mungall K.L."/>
            <person name="Murphy L.D."/>
            <person name="Niblett D."/>
            <person name="Odell C."/>
            <person name="Oliver K."/>
            <person name="O'Neil S."/>
            <person name="Pearson D."/>
            <person name="Quail M.A."/>
            <person name="Rabbinowitsch E."/>
            <person name="Rutherford K.M."/>
            <person name="Rutter S."/>
            <person name="Saunders D."/>
            <person name="Seeger K."/>
            <person name="Sharp S."/>
            <person name="Skelton J."/>
            <person name="Simmonds M.N."/>
            <person name="Squares R."/>
            <person name="Squares S."/>
            <person name="Stevens K."/>
            <person name="Taylor K."/>
            <person name="Taylor R.G."/>
            <person name="Tivey A."/>
            <person name="Walsh S.V."/>
            <person name="Warren T."/>
            <person name="Whitehead S."/>
            <person name="Woodward J.R."/>
            <person name="Volckaert G."/>
            <person name="Aert R."/>
            <person name="Robben J."/>
            <person name="Grymonprez B."/>
            <person name="Weltjens I."/>
            <person name="Vanstreels E."/>
            <person name="Rieger M."/>
            <person name="Schaefer M."/>
            <person name="Mueller-Auer S."/>
            <person name="Gabel C."/>
            <person name="Fuchs M."/>
            <person name="Duesterhoeft A."/>
            <person name="Fritzc C."/>
            <person name="Holzer E."/>
            <person name="Moestl D."/>
            <person name="Hilbert H."/>
            <person name="Borzym K."/>
            <person name="Langer I."/>
            <person name="Beck A."/>
            <person name="Lehrach H."/>
            <person name="Reinhardt R."/>
            <person name="Pohl T.M."/>
            <person name="Eger P."/>
            <person name="Zimmermann W."/>
            <person name="Wedler H."/>
            <person name="Wambutt R."/>
            <person name="Purnelle B."/>
            <person name="Goffeau A."/>
            <person name="Cadieu E."/>
            <person name="Dreano S."/>
            <person name="Gloux S."/>
            <person name="Lelaure V."/>
            <person name="Mottier S."/>
            <person name="Galibert F."/>
            <person name="Aves S.J."/>
            <person name="Xiang Z."/>
            <person name="Hunt C."/>
            <person name="Moore K."/>
            <person name="Hurst S.M."/>
            <person name="Lucas M."/>
            <person name="Rochet M."/>
            <person name="Gaillardin C."/>
            <person name="Tallada V.A."/>
            <person name="Garzon A."/>
            <person name="Thode G."/>
            <person name="Daga R.R."/>
            <person name="Cruzado L."/>
            <person name="Jimenez J."/>
            <person name="Sanchez M."/>
            <person name="del Rey F."/>
            <person name="Benito J."/>
            <person name="Dominguez A."/>
            <person name="Revuelta J.L."/>
            <person name="Moreno S."/>
            <person name="Armstrong J."/>
            <person name="Forsburg S.L."/>
            <person name="Cerutti L."/>
            <person name="Lowe T."/>
            <person name="McCombie W.R."/>
            <person name="Paulsen I."/>
            <person name="Potashkin J."/>
            <person name="Shpakovski G.V."/>
            <person name="Ussery D."/>
            <person name="Barrell B.G."/>
            <person name="Nurse P."/>
        </authorList>
    </citation>
    <scope>NUCLEOTIDE SEQUENCE [LARGE SCALE GENOMIC DNA]</scope>
    <source>
        <strain>972 / ATCC 24843</strain>
    </source>
</reference>
<reference key="2">
    <citation type="journal article" date="2001" name="Science">
        <title>Pot1, the putative telomere end-binding protein in fission yeast and humans.</title>
        <authorList>
            <person name="Baumann P."/>
            <person name="Cech T.R."/>
        </authorList>
    </citation>
    <scope>FUNCTION</scope>
</reference>
<reference key="3">
    <citation type="journal article" date="2002" name="Biochemistry">
        <title>Cooperative binding of single-stranded telomeric DNA by the Pot1 protein of Schizosaccharomyces pombe.</title>
        <authorList>
            <person name="Lei M."/>
            <person name="Baumann P."/>
            <person name="Cech T.R."/>
        </authorList>
    </citation>
    <scope>FUNCTION</scope>
    <scope>SUBUNIT</scope>
</reference>
<reference key="4">
    <citation type="journal article" date="2007" name="Proc. Natl. Acad. Sci. U.S.A.">
        <title>Protection of telomeres by a conserved Stn1-Ten1 complex.</title>
        <authorList>
            <person name="Martin V."/>
            <person name="Du L.-L."/>
            <person name="Rozenzhak S."/>
            <person name="Russell P."/>
        </authorList>
    </citation>
    <scope>SELF-ASSOCIATION</scope>
    <scope>SUBCELLULAR LOCATION</scope>
</reference>
<reference key="5">
    <citation type="journal article" date="2008" name="Science">
        <title>Fission yeast Pot1-Tpp1 protects telomeres and regulates telomere length.</title>
        <authorList>
            <person name="Miyoshi T."/>
            <person name="Kanoh J."/>
            <person name="Saito M."/>
            <person name="Ishikawa F."/>
        </authorList>
    </citation>
    <scope>FUNCTION</scope>
    <scope>SUBCELLULAR LOCATION</scope>
    <scope>INTERACTION WITH CCQ1; POZ1 AND TPZ1</scope>
</reference>
<reference key="6">
    <citation type="journal article" date="2003" name="Nature">
        <title>DNA self-recognition in the structure of Pot1 bound to telomeric single-stranded DNA.</title>
        <authorList>
            <person name="Lei M."/>
            <person name="Podell E.R."/>
            <person name="Baumann P."/>
            <person name="Cech T.R."/>
        </authorList>
    </citation>
    <scope>X-RAY CRYSTALLOGRAPHY (1.9 ANGSTROMS) OF 2-185</scope>
    <scope>TELOMERIC SINGLE-STRANDED DNA-BINDING</scope>
</reference>
<name>POT1_SCHPO</name>
<proteinExistence type="evidence at protein level"/>
<organism>
    <name type="scientific">Schizosaccharomyces pombe (strain 972 / ATCC 24843)</name>
    <name type="common">Fission yeast</name>
    <dbReference type="NCBI Taxonomy" id="284812"/>
    <lineage>
        <taxon>Eukaryota</taxon>
        <taxon>Fungi</taxon>
        <taxon>Dikarya</taxon>
        <taxon>Ascomycota</taxon>
        <taxon>Taphrinomycotina</taxon>
        <taxon>Schizosaccharomycetes</taxon>
        <taxon>Schizosaccharomycetales</taxon>
        <taxon>Schizosaccharomycetaceae</taxon>
        <taxon>Schizosaccharomyces</taxon>
    </lineage>
</organism>
<sequence length="555" mass="64111">MGEDVIDSLQLNELLNAGEYKIGELTFQSIRSSQELQKKNTIVNLFGIVKDFTPSRQSLHGTKDWVTTVYLWDPTCDTSSIGLQIHLFSKQGNDLPVIKQVGQPLLLHQITLRSYRDRTQGLSKDQFRYALWPDFSSNSKDTLCPQPMPRLMKTGDKEEQFALLLNKIWDEQTNKHKNGELLSTSSARQNQTGLSYPSVSFSLLSQITPHQRCSFYAQVIKTWYSDKNFTLYVTDYTENELFFPMSPYTSSSRWRGPFGRFSIRCILWDEHDFYCRNYIKEGDYVVMKNVRTKIDHLGYLECILHGDSAKRYNMSIEKVDSEEPELNEIKSRKRLYVQNCQNGIEAVIEKLSQSQQSENPFIAHELKQTSVNEITAHVINEPASLKLTTISTILHAPLQNLLKPRKHRLRVQVVDFWPKSLTQFAVLSQPPSSYVWMFALLVRDVSNVTLPVIFFDSDAAELINSSKIQPCNLADHPQMTLQLKERLFLIWGNLEERIQHHISKGESPTLAAEDVETPWFDIYVKEYIPVIGNTKDHQSLTFLQKRWRGFGTKIV</sequence>
<dbReference type="EMBL" id="CU329670">
    <property type="protein sequence ID" value="CAB16192.2"/>
    <property type="molecule type" value="Genomic_DNA"/>
</dbReference>
<dbReference type="PIR" id="T38425">
    <property type="entry name" value="T38425"/>
</dbReference>
<dbReference type="RefSeq" id="NP_594453.1">
    <property type="nucleotide sequence ID" value="NM_001019882.2"/>
</dbReference>
<dbReference type="PDB" id="1QZG">
    <property type="method" value="X-ray"/>
    <property type="resolution" value="1.90 A"/>
    <property type="chains" value="A/B=2-185"/>
</dbReference>
<dbReference type="PDB" id="1QZH">
    <property type="method" value="X-ray"/>
    <property type="resolution" value="2.40 A"/>
    <property type="chains" value="A/B/C/D/E/F=2-185"/>
</dbReference>
<dbReference type="PDB" id="4HID">
    <property type="method" value="X-ray"/>
    <property type="resolution" value="1.82 A"/>
    <property type="chains" value="A=198-339"/>
</dbReference>
<dbReference type="PDB" id="4HIK">
    <property type="method" value="X-ray"/>
    <property type="resolution" value="1.64 A"/>
    <property type="chains" value="A=198-339"/>
</dbReference>
<dbReference type="PDB" id="4HIM">
    <property type="method" value="X-ray"/>
    <property type="resolution" value="1.75 A"/>
    <property type="chains" value="A=198-339"/>
</dbReference>
<dbReference type="PDB" id="4HIO">
    <property type="method" value="X-ray"/>
    <property type="resolution" value="1.75 A"/>
    <property type="chains" value="A=198-339"/>
</dbReference>
<dbReference type="PDB" id="4HJ5">
    <property type="method" value="X-ray"/>
    <property type="resolution" value="2.04 A"/>
    <property type="chains" value="A=198-339"/>
</dbReference>
<dbReference type="PDB" id="4HJ7">
    <property type="method" value="X-ray"/>
    <property type="resolution" value="1.78 A"/>
    <property type="chains" value="A=198-339"/>
</dbReference>
<dbReference type="PDB" id="4HJ8">
    <property type="method" value="X-ray"/>
    <property type="resolution" value="2.04 A"/>
    <property type="chains" value="A=198-339"/>
</dbReference>
<dbReference type="PDB" id="4HJ9">
    <property type="method" value="X-ray"/>
    <property type="resolution" value="1.85 A"/>
    <property type="chains" value="A=198-339"/>
</dbReference>
<dbReference type="PDB" id="4HJA">
    <property type="method" value="X-ray"/>
    <property type="resolution" value="2.10 A"/>
    <property type="chains" value="A=198-339"/>
</dbReference>
<dbReference type="PDB" id="5USB">
    <property type="method" value="X-ray"/>
    <property type="resolution" value="1.61 A"/>
    <property type="chains" value="A=200-337"/>
</dbReference>
<dbReference type="PDB" id="5USN">
    <property type="method" value="X-ray"/>
    <property type="resolution" value="1.90 A"/>
    <property type="chains" value="A=200-339"/>
</dbReference>
<dbReference type="PDB" id="5USO">
    <property type="method" value="X-ray"/>
    <property type="resolution" value="2.00 A"/>
    <property type="chains" value="A=200-337"/>
</dbReference>
<dbReference type="PDB" id="6BWY">
    <property type="method" value="X-ray"/>
    <property type="resolution" value="2.90 A"/>
    <property type="chains" value="A/B/E/G=5-174"/>
</dbReference>
<dbReference type="PDB" id="7CUH">
    <property type="method" value="X-ray"/>
    <property type="resolution" value="3.00 A"/>
    <property type="chains" value="A=1-339"/>
</dbReference>
<dbReference type="PDB" id="7CUI">
    <property type="method" value="X-ray"/>
    <property type="resolution" value="2.60 A"/>
    <property type="chains" value="A/C=357-555"/>
</dbReference>
<dbReference type="PDBsum" id="1QZG"/>
<dbReference type="PDBsum" id="1QZH"/>
<dbReference type="PDBsum" id="4HID"/>
<dbReference type="PDBsum" id="4HIK"/>
<dbReference type="PDBsum" id="4HIM"/>
<dbReference type="PDBsum" id="4HIO"/>
<dbReference type="PDBsum" id="4HJ5"/>
<dbReference type="PDBsum" id="4HJ7"/>
<dbReference type="PDBsum" id="4HJ8"/>
<dbReference type="PDBsum" id="4HJ9"/>
<dbReference type="PDBsum" id="4HJA"/>
<dbReference type="PDBsum" id="5USB"/>
<dbReference type="PDBsum" id="5USN"/>
<dbReference type="PDBsum" id="5USO"/>
<dbReference type="PDBsum" id="6BWY"/>
<dbReference type="PDBsum" id="7CUH"/>
<dbReference type="PDBsum" id="7CUI"/>
<dbReference type="SMR" id="O13988"/>
<dbReference type="BioGRID" id="279156">
    <property type="interactions" value="33"/>
</dbReference>
<dbReference type="ComplexPortal" id="CPX-25757">
    <property type="entry name" value="Shelterin complex"/>
</dbReference>
<dbReference type="DIP" id="DIP-38935N"/>
<dbReference type="FunCoup" id="O13988">
    <property type="interactions" value="161"/>
</dbReference>
<dbReference type="IntAct" id="O13988">
    <property type="interactions" value="2"/>
</dbReference>
<dbReference type="STRING" id="284812.O13988"/>
<dbReference type="iPTMnet" id="O13988"/>
<dbReference type="PaxDb" id="4896-SPAC26H5.06.1"/>
<dbReference type="EnsemblFungi" id="SPAC26H5.06.1">
    <property type="protein sequence ID" value="SPAC26H5.06.1:pep"/>
    <property type="gene ID" value="SPAC26H5.06"/>
</dbReference>
<dbReference type="GeneID" id="2542703"/>
<dbReference type="KEGG" id="spo:2542703"/>
<dbReference type="PomBase" id="SPAC26H5.06">
    <property type="gene designation" value="pot1"/>
</dbReference>
<dbReference type="VEuPathDB" id="FungiDB:SPAC26H5.06"/>
<dbReference type="eggNOG" id="KOG4757">
    <property type="taxonomic scope" value="Eukaryota"/>
</dbReference>
<dbReference type="HOGENOM" id="CLU_016663_1_0_1"/>
<dbReference type="InParanoid" id="O13988"/>
<dbReference type="OMA" id="WEPHASF"/>
<dbReference type="PhylomeDB" id="O13988"/>
<dbReference type="Reactome" id="R-SPO-174437">
    <property type="pathway name" value="Removal of the Flap Intermediate from the C-strand"/>
</dbReference>
<dbReference type="EvolutionaryTrace" id="O13988"/>
<dbReference type="PRO" id="PR:O13988"/>
<dbReference type="Proteomes" id="UP000002485">
    <property type="component" value="Chromosome I"/>
</dbReference>
<dbReference type="GO" id="GO:0140445">
    <property type="term" value="C:chromosome, telomeric repeat region"/>
    <property type="evidence" value="ECO:0000314"/>
    <property type="project" value="PomBase"/>
</dbReference>
<dbReference type="GO" id="GO:0005829">
    <property type="term" value="C:cytosol"/>
    <property type="evidence" value="ECO:0007005"/>
    <property type="project" value="PomBase"/>
</dbReference>
<dbReference type="GO" id="GO:0000783">
    <property type="term" value="C:nuclear telomere cap complex"/>
    <property type="evidence" value="ECO:0000318"/>
    <property type="project" value="GO_Central"/>
</dbReference>
<dbReference type="GO" id="GO:0005634">
    <property type="term" value="C:nucleus"/>
    <property type="evidence" value="ECO:0007005"/>
    <property type="project" value="PomBase"/>
</dbReference>
<dbReference type="GO" id="GO:0070187">
    <property type="term" value="C:shelterin complex"/>
    <property type="evidence" value="ECO:0000305"/>
    <property type="project" value="PomBase"/>
</dbReference>
<dbReference type="GO" id="GO:0000782">
    <property type="term" value="C:telomere cap complex"/>
    <property type="evidence" value="ECO:0000314"/>
    <property type="project" value="PomBase"/>
</dbReference>
<dbReference type="GO" id="GO:0098505">
    <property type="term" value="F:G-rich strand telomeric DNA binding"/>
    <property type="evidence" value="ECO:0000314"/>
    <property type="project" value="PomBase"/>
</dbReference>
<dbReference type="GO" id="GO:0043047">
    <property type="term" value="F:single-stranded telomeric DNA binding"/>
    <property type="evidence" value="ECO:0000314"/>
    <property type="project" value="PomBase"/>
</dbReference>
<dbReference type="GO" id="GO:0010521">
    <property type="term" value="F:telomerase inhibitor activity"/>
    <property type="evidence" value="ECO:0000318"/>
    <property type="project" value="GO_Central"/>
</dbReference>
<dbReference type="GO" id="GO:0032210">
    <property type="term" value="P:regulation of telomere maintenance via telomerase"/>
    <property type="evidence" value="ECO:0000318"/>
    <property type="project" value="GO_Central"/>
</dbReference>
<dbReference type="GO" id="GO:0016233">
    <property type="term" value="P:telomere capping"/>
    <property type="evidence" value="ECO:0000314"/>
    <property type="project" value="PomBase"/>
</dbReference>
<dbReference type="GO" id="GO:0000723">
    <property type="term" value="P:telomere maintenance"/>
    <property type="evidence" value="ECO:0000315"/>
    <property type="project" value="PomBase"/>
</dbReference>
<dbReference type="CDD" id="cd04497">
    <property type="entry name" value="hPOT1_OB1_like"/>
    <property type="match status" value="1"/>
</dbReference>
<dbReference type="FunFam" id="2.40.50.140:FF:000303">
    <property type="entry name" value="Protection of telomeres protein 1"/>
    <property type="match status" value="1"/>
</dbReference>
<dbReference type="FunFam" id="2.40.50.140:FF:000426">
    <property type="entry name" value="Protection of telomeres protein 1"/>
    <property type="match status" value="1"/>
</dbReference>
<dbReference type="Gene3D" id="2.40.50.140">
    <property type="entry name" value="Nucleic acid-binding proteins"/>
    <property type="match status" value="2"/>
</dbReference>
<dbReference type="InterPro" id="IPR012340">
    <property type="entry name" value="NA-bd_OB-fold"/>
</dbReference>
<dbReference type="InterPro" id="IPR028389">
    <property type="entry name" value="POT1"/>
</dbReference>
<dbReference type="InterPro" id="IPR032042">
    <property type="entry name" value="POT1PC"/>
</dbReference>
<dbReference type="InterPro" id="IPR011564">
    <property type="entry name" value="Telomer_end-bd_POT1/Cdc13"/>
</dbReference>
<dbReference type="PANTHER" id="PTHR14513">
    <property type="entry name" value="PROTECTION OF TELOMERES 1"/>
    <property type="match status" value="1"/>
</dbReference>
<dbReference type="PANTHER" id="PTHR14513:SF0">
    <property type="entry name" value="PROTECTION OF TELOMERES PROTEIN 1"/>
    <property type="match status" value="1"/>
</dbReference>
<dbReference type="Pfam" id="PF02765">
    <property type="entry name" value="POT1"/>
    <property type="match status" value="1"/>
</dbReference>
<dbReference type="Pfam" id="PF16686">
    <property type="entry name" value="POT1PC"/>
    <property type="match status" value="1"/>
</dbReference>
<dbReference type="SMART" id="SM00976">
    <property type="entry name" value="Telo_bind"/>
    <property type="match status" value="1"/>
</dbReference>
<dbReference type="SUPFAM" id="SSF50249">
    <property type="entry name" value="Nucleic acid-binding proteins"/>
    <property type="match status" value="2"/>
</dbReference>
<keyword id="KW-0002">3D-structure</keyword>
<keyword id="KW-0158">Chromosome</keyword>
<keyword id="KW-0238">DNA-binding</keyword>
<keyword id="KW-0539">Nucleus</keyword>
<keyword id="KW-1185">Reference proteome</keyword>
<keyword id="KW-0779">Telomere</keyword>
<feature type="chain" id="PRO_0000121732" description="Protection of telomeres protein 1">
    <location>
        <begin position="1"/>
        <end position="555"/>
    </location>
</feature>
<feature type="helix" evidence="5">
    <location>
        <begin position="8"/>
        <end position="16"/>
    </location>
</feature>
<feature type="strand" evidence="5">
    <location>
        <begin position="18"/>
        <end position="22"/>
    </location>
</feature>
<feature type="strand" evidence="5">
    <location>
        <begin position="25"/>
        <end position="28"/>
    </location>
</feature>
<feature type="helix" evidence="5">
    <location>
        <begin position="30"/>
        <end position="33"/>
    </location>
</feature>
<feature type="strand" evidence="5">
    <location>
        <begin position="41"/>
        <end position="57"/>
    </location>
</feature>
<feature type="strand" evidence="5">
    <location>
        <begin position="65"/>
        <end position="72"/>
    </location>
</feature>
<feature type="strand" evidence="6">
    <location>
        <begin position="78"/>
        <end position="80"/>
    </location>
</feature>
<feature type="strand" evidence="5">
    <location>
        <begin position="83"/>
        <end position="93"/>
    </location>
</feature>
<feature type="strand" evidence="5">
    <location>
        <begin position="104"/>
        <end position="115"/>
    </location>
</feature>
<feature type="strand" evidence="5">
    <location>
        <begin position="118"/>
        <end position="131"/>
    </location>
</feature>
<feature type="strand" evidence="11">
    <location>
        <begin position="138"/>
        <end position="140"/>
    </location>
</feature>
<feature type="helix" evidence="11">
    <location>
        <begin position="148"/>
        <end position="150"/>
    </location>
</feature>
<feature type="helix" evidence="5">
    <location>
        <begin position="156"/>
        <end position="173"/>
    </location>
</feature>
<feature type="helix" evidence="9">
    <location>
        <begin position="204"/>
        <end position="206"/>
    </location>
</feature>
<feature type="strand" evidence="9">
    <location>
        <begin position="212"/>
        <end position="224"/>
    </location>
</feature>
<feature type="strand" evidence="9">
    <location>
        <begin position="229"/>
        <end position="234"/>
    </location>
</feature>
<feature type="turn" evidence="7">
    <location>
        <begin position="247"/>
        <end position="249"/>
    </location>
</feature>
<feature type="strand" evidence="10">
    <location>
        <begin position="258"/>
        <end position="260"/>
    </location>
</feature>
<feature type="strand" evidence="9">
    <location>
        <begin position="263"/>
        <end position="267"/>
    </location>
</feature>
<feature type="helix" evidence="9">
    <location>
        <begin position="270"/>
        <end position="275"/>
    </location>
</feature>
<feature type="turn" evidence="9">
    <location>
        <begin position="276"/>
        <end position="278"/>
    </location>
</feature>
<feature type="strand" evidence="9">
    <location>
        <begin position="284"/>
        <end position="294"/>
    </location>
</feature>
<feature type="strand" evidence="9">
    <location>
        <begin position="300"/>
        <end position="304"/>
    </location>
</feature>
<feature type="helix" evidence="8">
    <location>
        <begin position="310"/>
        <end position="312"/>
    </location>
</feature>
<feature type="strand" evidence="9">
    <location>
        <begin position="315"/>
        <end position="319"/>
    </location>
</feature>
<feature type="helix" evidence="9">
    <location>
        <begin position="324"/>
        <end position="326"/>
    </location>
</feature>
<feature type="helix" evidence="9">
    <location>
        <begin position="327"/>
        <end position="336"/>
    </location>
</feature>
<feature type="strand" evidence="12">
    <location>
        <begin position="378"/>
        <end position="380"/>
    </location>
</feature>
<feature type="helix" evidence="12">
    <location>
        <begin position="390"/>
        <end position="394"/>
    </location>
</feature>
<feature type="strand" evidence="12">
    <location>
        <begin position="405"/>
        <end position="419"/>
    </location>
</feature>
<feature type="helix" evidence="12">
    <location>
        <begin position="421"/>
        <end position="423"/>
    </location>
</feature>
<feature type="strand" evidence="12">
    <location>
        <begin position="424"/>
        <end position="429"/>
    </location>
</feature>
<feature type="turn" evidence="12">
    <location>
        <begin position="430"/>
        <end position="432"/>
    </location>
</feature>
<feature type="strand" evidence="12">
    <location>
        <begin position="433"/>
        <end position="443"/>
    </location>
</feature>
<feature type="strand" evidence="12">
    <location>
        <begin position="449"/>
        <end position="455"/>
    </location>
</feature>
<feature type="helix" evidence="12">
    <location>
        <begin position="456"/>
        <end position="463"/>
    </location>
</feature>
<feature type="helix" evidence="12">
    <location>
        <begin position="473"/>
        <end position="475"/>
    </location>
</feature>
<feature type="helix" evidence="12">
    <location>
        <begin position="477"/>
        <end position="491"/>
    </location>
</feature>
<feature type="helix" evidence="12">
    <location>
        <begin position="494"/>
        <end position="504"/>
    </location>
</feature>
<feature type="helix" evidence="12">
    <location>
        <begin position="508"/>
        <end position="510"/>
    </location>
</feature>
<feature type="helix" evidence="12">
    <location>
        <begin position="511"/>
        <end position="514"/>
    </location>
</feature>
<feature type="strand" evidence="12">
    <location>
        <begin position="519"/>
        <end position="527"/>
    </location>
</feature>
<feature type="helix" evidence="12">
    <location>
        <begin position="542"/>
        <end position="544"/>
    </location>
</feature>
<feature type="strand" evidence="12">
    <location>
        <begin position="546"/>
        <end position="554"/>
    </location>
</feature>
<evidence type="ECO:0000269" key="1">
    <source>
    </source>
</evidence>
<evidence type="ECO:0000269" key="2">
    <source>
    </source>
</evidence>
<evidence type="ECO:0000269" key="3">
    <source>
    </source>
</evidence>
<evidence type="ECO:0000305" key="4"/>
<evidence type="ECO:0007829" key="5">
    <source>
        <dbReference type="PDB" id="1QZG"/>
    </source>
</evidence>
<evidence type="ECO:0007829" key="6">
    <source>
        <dbReference type="PDB" id="1QZH"/>
    </source>
</evidence>
<evidence type="ECO:0007829" key="7">
    <source>
        <dbReference type="PDB" id="4HIO"/>
    </source>
</evidence>
<evidence type="ECO:0007829" key="8">
    <source>
        <dbReference type="PDB" id="4HJ7"/>
    </source>
</evidence>
<evidence type="ECO:0007829" key="9">
    <source>
        <dbReference type="PDB" id="5USB"/>
    </source>
</evidence>
<evidence type="ECO:0007829" key="10">
    <source>
        <dbReference type="PDB" id="5USN"/>
    </source>
</evidence>
<evidence type="ECO:0007829" key="11">
    <source>
        <dbReference type="PDB" id="7CUH"/>
    </source>
</evidence>
<evidence type="ECO:0007829" key="12">
    <source>
        <dbReference type="PDB" id="7CUI"/>
    </source>
</evidence>